<sequence length="408" mass="43830">MSWDQVWIDVNVATMDPSISAPYGAITNAAIAVKDGKIAWLGPRSELPAFDVLSIPVYRGKGGWITPGLIDAHTHLVFAGNRANEFELRLKGATYEEIARAGGGIISTVNACREADEAELFDLGRQRLNALAKEGVTTVEIKSGYGLDTETELKILRVARELGQHHHVDVKTTFLGAHAVPPEFKDNSDGYVDLIINKMLPAVIAENLADAVDVFCENIAFNLEQTERVLSAAKAAGLQVKLHAEQLSNMGGSELAARLGAKSVDHIEYLDEAGVKALSESGTCAVLLPGAFYFLRETQKPPIDLLRQYGVPMVLASDFNPGSSPICSTLLMLNMGCTLFRLTPEEALAGLTLNAAKALGIEESVGSLVVGKQADFCLWDIATPAQLAYSYGVNPCKDVVKNGKLVHQ</sequence>
<comment type="function">
    <text evidence="1">Catalyzes the hydrolytic cleavage of the carbon-nitrogen bond in imidazolone-5-propanoate to yield N-formimidoyl-L-glutamate. It is the third step in the universal histidine degradation pathway.</text>
</comment>
<comment type="catalytic activity">
    <reaction evidence="1">
        <text>4-imidazolone-5-propanoate + H2O = N-formimidoyl-L-glutamate</text>
        <dbReference type="Rhea" id="RHEA:23660"/>
        <dbReference type="ChEBI" id="CHEBI:15377"/>
        <dbReference type="ChEBI" id="CHEBI:58928"/>
        <dbReference type="ChEBI" id="CHEBI:77893"/>
        <dbReference type="EC" id="3.5.2.7"/>
    </reaction>
</comment>
<comment type="cofactor">
    <cofactor evidence="1">
        <name>Zn(2+)</name>
        <dbReference type="ChEBI" id="CHEBI:29105"/>
    </cofactor>
    <cofactor evidence="1">
        <name>Fe(3+)</name>
        <dbReference type="ChEBI" id="CHEBI:29034"/>
    </cofactor>
    <text evidence="1">Binds 1 zinc or iron ion per subunit.</text>
</comment>
<comment type="pathway">
    <text evidence="1">Amino-acid degradation; L-histidine degradation into L-glutamate; N-formimidoyl-L-glutamate from L-histidine: step 3/3.</text>
</comment>
<comment type="subcellular location">
    <subcellularLocation>
        <location evidence="1">Cytoplasm</location>
    </subcellularLocation>
</comment>
<comment type="similarity">
    <text evidence="1">Belongs to the metallo-dependent hydrolases superfamily. HutI family.</text>
</comment>
<dbReference type="EC" id="3.5.2.7" evidence="1"/>
<dbReference type="EMBL" id="CP000469">
    <property type="protein sequence ID" value="ABK46343.1"/>
    <property type="molecule type" value="Genomic_DNA"/>
</dbReference>
<dbReference type="RefSeq" id="WP_011715377.1">
    <property type="nucleotide sequence ID" value="NC_008577.1"/>
</dbReference>
<dbReference type="SMR" id="A0KRC4"/>
<dbReference type="STRING" id="94122.Shewana3_0098"/>
<dbReference type="KEGG" id="shn:Shewana3_0098"/>
<dbReference type="eggNOG" id="COG1228">
    <property type="taxonomic scope" value="Bacteria"/>
</dbReference>
<dbReference type="HOGENOM" id="CLU_041647_0_0_6"/>
<dbReference type="OrthoDB" id="9776455at2"/>
<dbReference type="UniPathway" id="UPA00379">
    <property type="reaction ID" value="UER00551"/>
</dbReference>
<dbReference type="Proteomes" id="UP000002589">
    <property type="component" value="Chromosome"/>
</dbReference>
<dbReference type="GO" id="GO:0005737">
    <property type="term" value="C:cytoplasm"/>
    <property type="evidence" value="ECO:0007669"/>
    <property type="project" value="UniProtKB-SubCell"/>
</dbReference>
<dbReference type="GO" id="GO:0050480">
    <property type="term" value="F:imidazolonepropionase activity"/>
    <property type="evidence" value="ECO:0007669"/>
    <property type="project" value="UniProtKB-UniRule"/>
</dbReference>
<dbReference type="GO" id="GO:0005506">
    <property type="term" value="F:iron ion binding"/>
    <property type="evidence" value="ECO:0007669"/>
    <property type="project" value="UniProtKB-UniRule"/>
</dbReference>
<dbReference type="GO" id="GO:0008270">
    <property type="term" value="F:zinc ion binding"/>
    <property type="evidence" value="ECO:0007669"/>
    <property type="project" value="UniProtKB-UniRule"/>
</dbReference>
<dbReference type="GO" id="GO:0019556">
    <property type="term" value="P:L-histidine catabolic process to glutamate and formamide"/>
    <property type="evidence" value="ECO:0007669"/>
    <property type="project" value="UniProtKB-UniPathway"/>
</dbReference>
<dbReference type="GO" id="GO:0019557">
    <property type="term" value="P:L-histidine catabolic process to glutamate and formate"/>
    <property type="evidence" value="ECO:0007669"/>
    <property type="project" value="UniProtKB-UniPathway"/>
</dbReference>
<dbReference type="CDD" id="cd01296">
    <property type="entry name" value="Imidazolone-5PH"/>
    <property type="match status" value="1"/>
</dbReference>
<dbReference type="FunFam" id="3.20.20.140:FF:000007">
    <property type="entry name" value="Imidazolonepropionase"/>
    <property type="match status" value="1"/>
</dbReference>
<dbReference type="Gene3D" id="3.20.20.140">
    <property type="entry name" value="Metal-dependent hydrolases"/>
    <property type="match status" value="1"/>
</dbReference>
<dbReference type="Gene3D" id="2.30.40.10">
    <property type="entry name" value="Urease, subunit C, domain 1"/>
    <property type="match status" value="1"/>
</dbReference>
<dbReference type="HAMAP" id="MF_00372">
    <property type="entry name" value="HutI"/>
    <property type="match status" value="1"/>
</dbReference>
<dbReference type="InterPro" id="IPR006680">
    <property type="entry name" value="Amidohydro-rel"/>
</dbReference>
<dbReference type="InterPro" id="IPR005920">
    <property type="entry name" value="HutI"/>
</dbReference>
<dbReference type="InterPro" id="IPR011059">
    <property type="entry name" value="Metal-dep_hydrolase_composite"/>
</dbReference>
<dbReference type="InterPro" id="IPR032466">
    <property type="entry name" value="Metal_Hydrolase"/>
</dbReference>
<dbReference type="NCBIfam" id="TIGR01224">
    <property type="entry name" value="hutI"/>
    <property type="match status" value="1"/>
</dbReference>
<dbReference type="PANTHER" id="PTHR42752">
    <property type="entry name" value="IMIDAZOLONEPROPIONASE"/>
    <property type="match status" value="1"/>
</dbReference>
<dbReference type="PANTHER" id="PTHR42752:SF1">
    <property type="entry name" value="IMIDAZOLONEPROPIONASE-RELATED"/>
    <property type="match status" value="1"/>
</dbReference>
<dbReference type="Pfam" id="PF01979">
    <property type="entry name" value="Amidohydro_1"/>
    <property type="match status" value="1"/>
</dbReference>
<dbReference type="SUPFAM" id="SSF51338">
    <property type="entry name" value="Composite domain of metallo-dependent hydrolases"/>
    <property type="match status" value="1"/>
</dbReference>
<dbReference type="SUPFAM" id="SSF51556">
    <property type="entry name" value="Metallo-dependent hydrolases"/>
    <property type="match status" value="1"/>
</dbReference>
<feature type="chain" id="PRO_0000306511" description="Imidazolonepropionase">
    <location>
        <begin position="1"/>
        <end position="408"/>
    </location>
</feature>
<feature type="binding site" evidence="1">
    <location>
        <position position="73"/>
    </location>
    <ligand>
        <name>Fe(3+)</name>
        <dbReference type="ChEBI" id="CHEBI:29034"/>
    </ligand>
</feature>
<feature type="binding site" evidence="1">
    <location>
        <position position="73"/>
    </location>
    <ligand>
        <name>Zn(2+)</name>
        <dbReference type="ChEBI" id="CHEBI:29105"/>
    </ligand>
</feature>
<feature type="binding site" evidence="1">
    <location>
        <position position="75"/>
    </location>
    <ligand>
        <name>Fe(3+)</name>
        <dbReference type="ChEBI" id="CHEBI:29034"/>
    </ligand>
</feature>
<feature type="binding site" evidence="1">
    <location>
        <position position="75"/>
    </location>
    <ligand>
        <name>Zn(2+)</name>
        <dbReference type="ChEBI" id="CHEBI:29105"/>
    </ligand>
</feature>
<feature type="binding site" evidence="1">
    <location>
        <position position="82"/>
    </location>
    <ligand>
        <name>4-imidazolone-5-propanoate</name>
        <dbReference type="ChEBI" id="CHEBI:77893"/>
    </ligand>
</feature>
<feature type="binding site" evidence="1">
    <location>
        <position position="145"/>
    </location>
    <ligand>
        <name>4-imidazolone-5-propanoate</name>
        <dbReference type="ChEBI" id="CHEBI:77893"/>
    </ligand>
</feature>
<feature type="binding site" evidence="1">
    <location>
        <position position="145"/>
    </location>
    <ligand>
        <name>N-formimidoyl-L-glutamate</name>
        <dbReference type="ChEBI" id="CHEBI:58928"/>
    </ligand>
</feature>
<feature type="binding site" evidence="1">
    <location>
        <position position="178"/>
    </location>
    <ligand>
        <name>4-imidazolone-5-propanoate</name>
        <dbReference type="ChEBI" id="CHEBI:77893"/>
    </ligand>
</feature>
<feature type="binding site" evidence="1">
    <location>
        <position position="243"/>
    </location>
    <ligand>
        <name>Fe(3+)</name>
        <dbReference type="ChEBI" id="CHEBI:29034"/>
    </ligand>
</feature>
<feature type="binding site" evidence="1">
    <location>
        <position position="243"/>
    </location>
    <ligand>
        <name>Zn(2+)</name>
        <dbReference type="ChEBI" id="CHEBI:29105"/>
    </ligand>
</feature>
<feature type="binding site" evidence="1">
    <location>
        <position position="246"/>
    </location>
    <ligand>
        <name>4-imidazolone-5-propanoate</name>
        <dbReference type="ChEBI" id="CHEBI:77893"/>
    </ligand>
</feature>
<feature type="binding site" evidence="1">
    <location>
        <position position="318"/>
    </location>
    <ligand>
        <name>Fe(3+)</name>
        <dbReference type="ChEBI" id="CHEBI:29034"/>
    </ligand>
</feature>
<feature type="binding site" evidence="1">
    <location>
        <position position="318"/>
    </location>
    <ligand>
        <name>Zn(2+)</name>
        <dbReference type="ChEBI" id="CHEBI:29105"/>
    </ligand>
</feature>
<feature type="binding site" evidence="1">
    <location>
        <position position="320"/>
    </location>
    <ligand>
        <name>N-formimidoyl-L-glutamate</name>
        <dbReference type="ChEBI" id="CHEBI:58928"/>
    </ligand>
</feature>
<feature type="binding site" evidence="1">
    <location>
        <position position="322"/>
    </location>
    <ligand>
        <name>N-formimidoyl-L-glutamate</name>
        <dbReference type="ChEBI" id="CHEBI:58928"/>
    </ligand>
</feature>
<feature type="binding site" evidence="1">
    <location>
        <position position="323"/>
    </location>
    <ligand>
        <name>4-imidazolone-5-propanoate</name>
        <dbReference type="ChEBI" id="CHEBI:77893"/>
    </ligand>
</feature>
<gene>
    <name evidence="1" type="primary">hutI</name>
    <name type="ordered locus">Shewana3_0098</name>
</gene>
<keyword id="KW-0963">Cytoplasm</keyword>
<keyword id="KW-0369">Histidine metabolism</keyword>
<keyword id="KW-0378">Hydrolase</keyword>
<keyword id="KW-0408">Iron</keyword>
<keyword id="KW-0479">Metal-binding</keyword>
<keyword id="KW-0862">Zinc</keyword>
<reference key="1">
    <citation type="submission" date="2006-09" db="EMBL/GenBank/DDBJ databases">
        <title>Complete sequence of chromosome 1 of Shewanella sp. ANA-3.</title>
        <authorList>
            <person name="Copeland A."/>
            <person name="Lucas S."/>
            <person name="Lapidus A."/>
            <person name="Barry K."/>
            <person name="Detter J.C."/>
            <person name="Glavina del Rio T."/>
            <person name="Hammon N."/>
            <person name="Israni S."/>
            <person name="Dalin E."/>
            <person name="Tice H."/>
            <person name="Pitluck S."/>
            <person name="Chertkov O."/>
            <person name="Brettin T."/>
            <person name="Bruce D."/>
            <person name="Han C."/>
            <person name="Tapia R."/>
            <person name="Gilna P."/>
            <person name="Schmutz J."/>
            <person name="Larimer F."/>
            <person name="Land M."/>
            <person name="Hauser L."/>
            <person name="Kyrpides N."/>
            <person name="Kim E."/>
            <person name="Newman D."/>
            <person name="Salticov C."/>
            <person name="Konstantinidis K."/>
            <person name="Klappenback J."/>
            <person name="Tiedje J."/>
            <person name="Richardson P."/>
        </authorList>
    </citation>
    <scope>NUCLEOTIDE SEQUENCE [LARGE SCALE GENOMIC DNA]</scope>
    <source>
        <strain>ANA-3</strain>
    </source>
</reference>
<protein>
    <recommendedName>
        <fullName evidence="1">Imidazolonepropionase</fullName>
        <ecNumber evidence="1">3.5.2.7</ecNumber>
    </recommendedName>
    <alternativeName>
        <fullName evidence="1">Imidazolone-5-propionate hydrolase</fullName>
    </alternativeName>
</protein>
<organism>
    <name type="scientific">Shewanella sp. (strain ANA-3)</name>
    <dbReference type="NCBI Taxonomy" id="94122"/>
    <lineage>
        <taxon>Bacteria</taxon>
        <taxon>Pseudomonadati</taxon>
        <taxon>Pseudomonadota</taxon>
        <taxon>Gammaproteobacteria</taxon>
        <taxon>Alteromonadales</taxon>
        <taxon>Shewanellaceae</taxon>
        <taxon>Shewanella</taxon>
    </lineage>
</organism>
<proteinExistence type="inferred from homology"/>
<name>HUTI_SHESA</name>
<accession>A0KRC4</accession>
<evidence type="ECO:0000255" key="1">
    <source>
        <dbReference type="HAMAP-Rule" id="MF_00372"/>
    </source>
</evidence>